<dbReference type="EC" id="6.3.4.4" evidence="2"/>
<dbReference type="EMBL" id="GG657451">
    <property type="protein sequence ID" value="OAT06913.1"/>
    <property type="molecule type" value="Genomic_DNA"/>
</dbReference>
<dbReference type="RefSeq" id="XP_002626872.1">
    <property type="nucleotide sequence ID" value="XM_002626826.2"/>
</dbReference>
<dbReference type="SMR" id="C5JKJ6"/>
<dbReference type="STRING" id="559298.C5JKJ6"/>
<dbReference type="GeneID" id="8505981"/>
<dbReference type="KEGG" id="bgh:BDBG_03049"/>
<dbReference type="VEuPathDB" id="FungiDB:BDBG_03049"/>
<dbReference type="HOGENOM" id="CLU_029848_3_2_1"/>
<dbReference type="OrthoDB" id="10265645at2759"/>
<dbReference type="UniPathway" id="UPA00075">
    <property type="reaction ID" value="UER00335"/>
</dbReference>
<dbReference type="Proteomes" id="UP000002038">
    <property type="component" value="Unassembled WGS sequence"/>
</dbReference>
<dbReference type="GO" id="GO:0005737">
    <property type="term" value="C:cytoplasm"/>
    <property type="evidence" value="ECO:0007669"/>
    <property type="project" value="UniProtKB-SubCell"/>
</dbReference>
<dbReference type="GO" id="GO:0004019">
    <property type="term" value="F:adenylosuccinate synthase activity"/>
    <property type="evidence" value="ECO:0007669"/>
    <property type="project" value="UniProtKB-UniRule"/>
</dbReference>
<dbReference type="GO" id="GO:0005525">
    <property type="term" value="F:GTP binding"/>
    <property type="evidence" value="ECO:0007669"/>
    <property type="project" value="UniProtKB-UniRule"/>
</dbReference>
<dbReference type="GO" id="GO:0000287">
    <property type="term" value="F:magnesium ion binding"/>
    <property type="evidence" value="ECO:0007669"/>
    <property type="project" value="UniProtKB-UniRule"/>
</dbReference>
<dbReference type="GO" id="GO:0044208">
    <property type="term" value="P:'de novo' AMP biosynthetic process"/>
    <property type="evidence" value="ECO:0007669"/>
    <property type="project" value="UniProtKB-UniRule"/>
</dbReference>
<dbReference type="GO" id="GO:0046040">
    <property type="term" value="P:IMP metabolic process"/>
    <property type="evidence" value="ECO:0007669"/>
    <property type="project" value="TreeGrafter"/>
</dbReference>
<dbReference type="CDD" id="cd03108">
    <property type="entry name" value="AdSS"/>
    <property type="match status" value="1"/>
</dbReference>
<dbReference type="FunFam" id="1.10.300.10:FF:000001">
    <property type="entry name" value="Adenylosuccinate synthetase"/>
    <property type="match status" value="1"/>
</dbReference>
<dbReference type="FunFam" id="3.90.170.10:FF:000001">
    <property type="entry name" value="Adenylosuccinate synthetase"/>
    <property type="match status" value="1"/>
</dbReference>
<dbReference type="Gene3D" id="3.40.440.10">
    <property type="entry name" value="Adenylosuccinate Synthetase, subunit A, domain 1"/>
    <property type="match status" value="1"/>
</dbReference>
<dbReference type="Gene3D" id="1.10.300.10">
    <property type="entry name" value="Adenylosuccinate Synthetase, subunit A, domain 2"/>
    <property type="match status" value="1"/>
</dbReference>
<dbReference type="Gene3D" id="3.90.170.10">
    <property type="entry name" value="Adenylosuccinate Synthetase, subunit A, domain 3"/>
    <property type="match status" value="1"/>
</dbReference>
<dbReference type="HAMAP" id="MF_00011">
    <property type="entry name" value="Adenylosucc_synth"/>
    <property type="match status" value="1"/>
</dbReference>
<dbReference type="InterPro" id="IPR018220">
    <property type="entry name" value="Adenylosuccin_syn_GTP-bd"/>
</dbReference>
<dbReference type="InterPro" id="IPR033128">
    <property type="entry name" value="Adenylosuccin_syn_Lys_AS"/>
</dbReference>
<dbReference type="InterPro" id="IPR042109">
    <property type="entry name" value="Adenylosuccinate_synth_dom1"/>
</dbReference>
<dbReference type="InterPro" id="IPR042110">
    <property type="entry name" value="Adenylosuccinate_synth_dom2"/>
</dbReference>
<dbReference type="InterPro" id="IPR042111">
    <property type="entry name" value="Adenylosuccinate_synth_dom3"/>
</dbReference>
<dbReference type="InterPro" id="IPR001114">
    <property type="entry name" value="Adenylosuccinate_synthetase"/>
</dbReference>
<dbReference type="InterPro" id="IPR027417">
    <property type="entry name" value="P-loop_NTPase"/>
</dbReference>
<dbReference type="NCBIfam" id="NF002223">
    <property type="entry name" value="PRK01117.1"/>
    <property type="match status" value="1"/>
</dbReference>
<dbReference type="NCBIfam" id="TIGR00184">
    <property type="entry name" value="purA"/>
    <property type="match status" value="1"/>
</dbReference>
<dbReference type="PANTHER" id="PTHR11846">
    <property type="entry name" value="ADENYLOSUCCINATE SYNTHETASE"/>
    <property type="match status" value="1"/>
</dbReference>
<dbReference type="PANTHER" id="PTHR11846:SF0">
    <property type="entry name" value="ADENYLOSUCCINATE SYNTHETASE"/>
    <property type="match status" value="1"/>
</dbReference>
<dbReference type="Pfam" id="PF00709">
    <property type="entry name" value="Adenylsucc_synt"/>
    <property type="match status" value="1"/>
</dbReference>
<dbReference type="SMART" id="SM00788">
    <property type="entry name" value="Adenylsucc_synt"/>
    <property type="match status" value="1"/>
</dbReference>
<dbReference type="SUPFAM" id="SSF52540">
    <property type="entry name" value="P-loop containing nucleoside triphosphate hydrolases"/>
    <property type="match status" value="1"/>
</dbReference>
<dbReference type="PROSITE" id="PS01266">
    <property type="entry name" value="ADENYLOSUCCIN_SYN_1"/>
    <property type="match status" value="1"/>
</dbReference>
<dbReference type="PROSITE" id="PS00513">
    <property type="entry name" value="ADENYLOSUCCIN_SYN_2"/>
    <property type="match status" value="1"/>
</dbReference>
<accession>C5JKJ6</accession>
<accession>A0A179UGP2</accession>
<organism>
    <name type="scientific">Blastomyces gilchristii (strain SLH14081)</name>
    <name type="common">Blastomyces dermatitidis</name>
    <dbReference type="NCBI Taxonomy" id="559298"/>
    <lineage>
        <taxon>Eukaryota</taxon>
        <taxon>Fungi</taxon>
        <taxon>Dikarya</taxon>
        <taxon>Ascomycota</taxon>
        <taxon>Pezizomycotina</taxon>
        <taxon>Eurotiomycetes</taxon>
        <taxon>Eurotiomycetidae</taxon>
        <taxon>Onygenales</taxon>
        <taxon>Ajellomycetaceae</taxon>
        <taxon>Blastomyces</taxon>
    </lineage>
</organism>
<gene>
    <name type="ORF">BDBG_03049</name>
</gene>
<name>PURA_BLAGS</name>
<reference key="1">
    <citation type="journal article" date="2015" name="PLoS Genet.">
        <title>The dynamic genome and transcriptome of the human fungal pathogen Blastomyces and close relative Emmonsia.</title>
        <authorList>
            <person name="Munoz J.F."/>
            <person name="Gauthier G.M."/>
            <person name="Desjardins C.A."/>
            <person name="Gallo J.E."/>
            <person name="Holder J."/>
            <person name="Sullivan T.D."/>
            <person name="Marty A.J."/>
            <person name="Carmen J.C."/>
            <person name="Chen Z."/>
            <person name="Ding L."/>
            <person name="Gujja S."/>
            <person name="Magrini V."/>
            <person name="Misas E."/>
            <person name="Mitreva M."/>
            <person name="Priest M."/>
            <person name="Saif S."/>
            <person name="Whiston E.A."/>
            <person name="Young S."/>
            <person name="Zeng Q."/>
            <person name="Goldman W.E."/>
            <person name="Mardis E.R."/>
            <person name="Taylor J.W."/>
            <person name="McEwen J.G."/>
            <person name="Clay O.K."/>
            <person name="Klein B.S."/>
            <person name="Cuomo C.A."/>
        </authorList>
    </citation>
    <scope>NUCLEOTIDE SEQUENCE [LARGE SCALE GENOMIC DNA]</scope>
    <source>
        <strain>SLH14081</strain>
    </source>
</reference>
<comment type="function">
    <text evidence="1">Plays an important role in the de novo pathway and in the salvage pathway of purine nucleotide biosynthesis. Catalyzes the first committed step in the biosynthesis of AMP from IMP (By similarity).</text>
</comment>
<comment type="catalytic activity">
    <reaction evidence="2">
        <text>IMP + L-aspartate + GTP = N(6)-(1,2-dicarboxyethyl)-AMP + GDP + phosphate + 2 H(+)</text>
        <dbReference type="Rhea" id="RHEA:15753"/>
        <dbReference type="ChEBI" id="CHEBI:15378"/>
        <dbReference type="ChEBI" id="CHEBI:29991"/>
        <dbReference type="ChEBI" id="CHEBI:37565"/>
        <dbReference type="ChEBI" id="CHEBI:43474"/>
        <dbReference type="ChEBI" id="CHEBI:57567"/>
        <dbReference type="ChEBI" id="CHEBI:58053"/>
        <dbReference type="ChEBI" id="CHEBI:58189"/>
        <dbReference type="EC" id="6.3.4.4"/>
    </reaction>
</comment>
<comment type="cofactor">
    <cofactor evidence="2">
        <name>Mg(2+)</name>
        <dbReference type="ChEBI" id="CHEBI:18420"/>
    </cofactor>
    <text evidence="2">Binds 1 Mg(2+) ion per subunit.</text>
</comment>
<comment type="pathway">
    <text evidence="2">Purine metabolism; AMP biosynthesis via de novo pathway; AMP from IMP: step 1/2.</text>
</comment>
<comment type="subunit">
    <text evidence="2">Homodimer.</text>
</comment>
<comment type="subcellular location">
    <subcellularLocation>
        <location evidence="2">Cytoplasm</location>
    </subcellularLocation>
</comment>
<comment type="similarity">
    <text evidence="2">Belongs to the adenylosuccinate synthetase family.</text>
</comment>
<proteinExistence type="inferred from homology"/>
<keyword id="KW-0963">Cytoplasm</keyword>
<keyword id="KW-0342">GTP-binding</keyword>
<keyword id="KW-0436">Ligase</keyword>
<keyword id="KW-0460">Magnesium</keyword>
<keyword id="KW-0479">Metal-binding</keyword>
<keyword id="KW-0547">Nucleotide-binding</keyword>
<keyword id="KW-0658">Purine biosynthesis</keyword>
<keyword id="KW-1185">Reference proteome</keyword>
<feature type="chain" id="PRO_0000399317" description="Adenylosuccinate synthetase">
    <location>
        <begin position="1"/>
        <end position="422"/>
    </location>
</feature>
<feature type="active site" description="Proton acceptor" evidence="2">
    <location>
        <position position="12"/>
    </location>
</feature>
<feature type="active site" description="Proton donor" evidence="2">
    <location>
        <position position="40"/>
    </location>
</feature>
<feature type="binding site" evidence="2">
    <location>
        <begin position="11"/>
        <end position="17"/>
    </location>
    <ligand>
        <name>GTP</name>
        <dbReference type="ChEBI" id="CHEBI:37565"/>
    </ligand>
</feature>
<feature type="binding site" description="in other chain" evidence="2">
    <location>
        <begin position="12"/>
        <end position="15"/>
    </location>
    <ligand>
        <name>IMP</name>
        <dbReference type="ChEBI" id="CHEBI:58053"/>
        <note>ligand shared between dimeric partners</note>
    </ligand>
</feature>
<feature type="binding site" evidence="2">
    <location>
        <position position="12"/>
    </location>
    <ligand>
        <name>Mg(2+)</name>
        <dbReference type="ChEBI" id="CHEBI:18420"/>
    </ligand>
</feature>
<feature type="binding site" description="in other chain" evidence="2">
    <location>
        <begin position="37"/>
        <end position="40"/>
    </location>
    <ligand>
        <name>IMP</name>
        <dbReference type="ChEBI" id="CHEBI:58053"/>
        <note>ligand shared between dimeric partners</note>
    </ligand>
</feature>
<feature type="binding site" evidence="2">
    <location>
        <begin position="39"/>
        <end position="41"/>
    </location>
    <ligand>
        <name>GTP</name>
        <dbReference type="ChEBI" id="CHEBI:37565"/>
    </ligand>
</feature>
<feature type="binding site" evidence="2">
    <location>
        <position position="39"/>
    </location>
    <ligand>
        <name>Mg(2+)</name>
        <dbReference type="ChEBI" id="CHEBI:18420"/>
    </ligand>
</feature>
<feature type="binding site" description="in other chain" evidence="2">
    <location>
        <position position="129"/>
    </location>
    <ligand>
        <name>IMP</name>
        <dbReference type="ChEBI" id="CHEBI:58053"/>
        <note>ligand shared between dimeric partners</note>
    </ligand>
</feature>
<feature type="binding site" evidence="2">
    <location>
        <position position="143"/>
    </location>
    <ligand>
        <name>IMP</name>
        <dbReference type="ChEBI" id="CHEBI:58053"/>
        <note>ligand shared between dimeric partners</note>
    </ligand>
</feature>
<feature type="binding site" description="in other chain" evidence="2">
    <location>
        <position position="219"/>
    </location>
    <ligand>
        <name>IMP</name>
        <dbReference type="ChEBI" id="CHEBI:58053"/>
        <note>ligand shared between dimeric partners</note>
    </ligand>
</feature>
<feature type="binding site" description="in other chain" evidence="2">
    <location>
        <position position="234"/>
    </location>
    <ligand>
        <name>IMP</name>
        <dbReference type="ChEBI" id="CHEBI:58053"/>
        <note>ligand shared between dimeric partners</note>
    </ligand>
</feature>
<feature type="binding site" evidence="2">
    <location>
        <begin position="294"/>
        <end position="300"/>
    </location>
    <ligand>
        <name>substrate</name>
    </ligand>
</feature>
<feature type="binding site" description="in other chain" evidence="2">
    <location>
        <position position="298"/>
    </location>
    <ligand>
        <name>IMP</name>
        <dbReference type="ChEBI" id="CHEBI:58053"/>
        <note>ligand shared between dimeric partners</note>
    </ligand>
</feature>
<feature type="binding site" evidence="2">
    <location>
        <position position="300"/>
    </location>
    <ligand>
        <name>GTP</name>
        <dbReference type="ChEBI" id="CHEBI:37565"/>
    </ligand>
</feature>
<feature type="binding site" evidence="2">
    <location>
        <begin position="326"/>
        <end position="328"/>
    </location>
    <ligand>
        <name>GTP</name>
        <dbReference type="ChEBI" id="CHEBI:37565"/>
    </ligand>
</feature>
<feature type="binding site" evidence="2">
    <location>
        <begin position="409"/>
        <end position="411"/>
    </location>
    <ligand>
        <name>GTP</name>
        <dbReference type="ChEBI" id="CHEBI:37565"/>
    </ligand>
</feature>
<evidence type="ECO:0000250" key="1"/>
<evidence type="ECO:0000255" key="2">
    <source>
        <dbReference type="HAMAP-Rule" id="MF_03125"/>
    </source>
</evidence>
<sequence>MVTIVLGAQFGDEGKGKITDLLSQSATLCCRAAGGHNAGHTIVHDNITYDFHILPSGLISPDCVNLIGSGTVVHVPSFFKELDALKAKGLKEADKRIFISDRAHVCFDLHSVVDGLEEADLAGKKVGTTGKGIGPCYSDKASRRGVRIGEVLEEGVAEDKLRSLEAGYRRRFGELQYDLEDEVKRFNEYRTKLQPYVVDQMAFLEKYRSCPSVLVEGANALMLDIDHGTYPYVTSSCTGLGGAIQGLTLNPTSIKSIVGVVKAYTTRVGSGPFPTEQINDIGEKLQSVGREFGVTTGRRRRCGWLDMVMCRYSNAINHYTTINLTKLDILDDFDEIKVAVAYKLDGRRLESFPAQLEVLDKVEVEYVTFPGWKSNTMGVTRWEDLPVNARRYVQFIEQEMGGVPIKWIGTGPARTHMIEREV</sequence>
<protein>
    <recommendedName>
        <fullName evidence="2">Adenylosuccinate synthetase</fullName>
        <shortName evidence="2">AMPSase</shortName>
        <shortName evidence="2">AdSS</shortName>
        <ecNumber evidence="2">6.3.4.4</ecNumber>
    </recommendedName>
    <alternativeName>
        <fullName evidence="2">IMP--aspartate ligase</fullName>
    </alternativeName>
</protein>